<comment type="function">
    <text>This iron-iron protein is part of the nitrogenase complex that catalyzes the key enzymatic reactions in nitrogen fixation. Other nitrogenase complexes utilize a molybdenum-iron protein or a vanadium-iron protein.</text>
</comment>
<comment type="catalytic activity">
    <reaction>
        <text>N2 + 8 reduced [2Fe-2S]-[ferredoxin] + 16 ATP + 16 H2O = H2 + 8 oxidized [2Fe-2S]-[ferredoxin] + 2 NH4(+) + 16 ADP + 16 phosphate + 6 H(+)</text>
        <dbReference type="Rhea" id="RHEA:21448"/>
        <dbReference type="Rhea" id="RHEA-COMP:10000"/>
        <dbReference type="Rhea" id="RHEA-COMP:10001"/>
        <dbReference type="ChEBI" id="CHEBI:15377"/>
        <dbReference type="ChEBI" id="CHEBI:15378"/>
        <dbReference type="ChEBI" id="CHEBI:17997"/>
        <dbReference type="ChEBI" id="CHEBI:18276"/>
        <dbReference type="ChEBI" id="CHEBI:28938"/>
        <dbReference type="ChEBI" id="CHEBI:30616"/>
        <dbReference type="ChEBI" id="CHEBI:33737"/>
        <dbReference type="ChEBI" id="CHEBI:33738"/>
        <dbReference type="ChEBI" id="CHEBI:43474"/>
        <dbReference type="ChEBI" id="CHEBI:456216"/>
        <dbReference type="EC" id="1.18.6.1"/>
    </reaction>
</comment>
<comment type="cofactor">
    <cofactor evidence="1">
        <name>[8Fe-7S] cluster</name>
        <dbReference type="ChEBI" id="CHEBI:21143"/>
    </cofactor>
    <text evidence="1">Binds 1 [8Fe-7S] cluster per heterodimer.</text>
</comment>
<comment type="subunit">
    <text>Hexamer of two alpha, two beta, and two delta chains.</text>
</comment>
<comment type="similarity">
    <text evidence="3">Belongs to the NifD/NifK/NifE/NifN family.</text>
</comment>
<keyword id="KW-0002">3D-structure</keyword>
<keyword id="KW-0067">ATP-binding</keyword>
<keyword id="KW-0903">Direct protein sequencing</keyword>
<keyword id="KW-0408">Iron</keyword>
<keyword id="KW-0411">Iron-sulfur</keyword>
<keyword id="KW-0479">Metal-binding</keyword>
<keyword id="KW-0535">Nitrogen fixation</keyword>
<keyword id="KW-0547">Nucleotide-binding</keyword>
<keyword id="KW-0560">Oxidoreductase</keyword>
<feature type="initiator methionine" description="Removed" evidence="2">
    <location>
        <position position="1"/>
    </location>
</feature>
<feature type="chain" id="PRO_0000153092" description="Nitrogenase iron-iron protein beta chain">
    <location>
        <begin position="2"/>
        <end position="462"/>
    </location>
</feature>
<feature type="binding site" evidence="1">
    <location>
        <position position="20"/>
    </location>
    <ligand>
        <name>[8Fe-7S] cluster</name>
        <dbReference type="ChEBI" id="CHEBI:21143"/>
        <note>ligand shared with alpha chain</note>
    </ligand>
</feature>
<feature type="binding site" evidence="1">
    <location>
        <position position="45"/>
    </location>
    <ligand>
        <name>[8Fe-7S] cluster</name>
        <dbReference type="ChEBI" id="CHEBI:21143"/>
        <note>ligand shared with alpha chain</note>
    </ligand>
</feature>
<feature type="binding site" evidence="1">
    <location>
        <position position="104"/>
    </location>
    <ligand>
        <name>[8Fe-7S] cluster</name>
        <dbReference type="ChEBI" id="CHEBI:21143"/>
        <note>ligand shared with alpha chain</note>
    </ligand>
</feature>
<feature type="binding site" evidence="1">
    <location>
        <position position="143"/>
    </location>
    <ligand>
        <name>[8Fe-7S] cluster</name>
        <dbReference type="ChEBI" id="CHEBI:21143"/>
        <note>ligand shared with alpha chain</note>
    </ligand>
</feature>
<feature type="strand" evidence="4">
    <location>
        <begin position="3"/>
        <end position="7"/>
    </location>
</feature>
<feature type="strand" evidence="4">
    <location>
        <begin position="11"/>
        <end position="15"/>
    </location>
</feature>
<feature type="helix" evidence="4">
    <location>
        <begin position="21"/>
        <end position="30"/>
    </location>
</feature>
<feature type="strand" evidence="4">
    <location>
        <begin position="38"/>
        <end position="41"/>
    </location>
</feature>
<feature type="helix" evidence="4">
    <location>
        <begin position="44"/>
        <end position="57"/>
    </location>
</feature>
<feature type="helix" evidence="4">
    <location>
        <begin position="70"/>
        <end position="75"/>
    </location>
</feature>
<feature type="helix" evidence="4">
    <location>
        <begin position="78"/>
        <end position="89"/>
    </location>
</feature>
<feature type="strand" evidence="4">
    <location>
        <begin position="97"/>
        <end position="102"/>
    </location>
</feature>
<feature type="helix" evidence="4">
    <location>
        <begin position="104"/>
        <end position="109"/>
    </location>
</feature>
<feature type="helix" evidence="4">
    <location>
        <begin position="113"/>
        <end position="122"/>
    </location>
</feature>
<feature type="helix" evidence="4">
    <location>
        <begin position="124"/>
        <end position="127"/>
    </location>
</feature>
<feature type="strand" evidence="4">
    <location>
        <begin position="135"/>
        <end position="139"/>
    </location>
</feature>
<feature type="helix" evidence="4">
    <location>
        <begin position="148"/>
        <end position="163"/>
    </location>
</feature>
<feature type="strand" evidence="4">
    <location>
        <begin position="173"/>
        <end position="176"/>
    </location>
</feature>
<feature type="helix" evidence="4">
    <location>
        <begin position="182"/>
        <end position="195"/>
    </location>
</feature>
<feature type="strand" evidence="4">
    <location>
        <begin position="199"/>
        <end position="202"/>
    </location>
</feature>
<feature type="helix" evidence="4">
    <location>
        <begin position="206"/>
        <end position="208"/>
    </location>
</feature>
<feature type="helix" evidence="4">
    <location>
        <begin position="226"/>
        <end position="230"/>
    </location>
</feature>
<feature type="helix" evidence="4">
    <location>
        <begin position="231"/>
        <end position="234"/>
    </location>
</feature>
<feature type="strand" evidence="4">
    <location>
        <begin position="236"/>
        <end position="241"/>
    </location>
</feature>
<feature type="helix" evidence="4">
    <location>
        <begin position="243"/>
        <end position="257"/>
    </location>
</feature>
<feature type="strand" evidence="4">
    <location>
        <begin position="261"/>
        <end position="263"/>
    </location>
</feature>
<feature type="helix" evidence="4">
    <location>
        <begin position="270"/>
        <end position="284"/>
    </location>
</feature>
<feature type="helix" evidence="4">
    <location>
        <begin position="290"/>
        <end position="304"/>
    </location>
</feature>
<feature type="helix" evidence="4">
    <location>
        <begin position="307"/>
        <end position="310"/>
    </location>
</feature>
<feature type="turn" evidence="4">
    <location>
        <begin position="311"/>
        <end position="313"/>
    </location>
</feature>
<feature type="strand" evidence="4">
    <location>
        <begin position="315"/>
        <end position="318"/>
    </location>
</feature>
<feature type="helix" evidence="4">
    <location>
        <begin position="322"/>
        <end position="334"/>
    </location>
</feature>
<feature type="strand" evidence="4">
    <location>
        <begin position="338"/>
        <end position="343"/>
    </location>
</feature>
<feature type="helix" evidence="4">
    <location>
        <begin position="351"/>
        <end position="353"/>
    </location>
</feature>
<feature type="helix" evidence="4">
    <location>
        <begin position="355"/>
        <end position="363"/>
    </location>
</feature>
<feature type="strand" evidence="4">
    <location>
        <begin position="368"/>
        <end position="372"/>
    </location>
</feature>
<feature type="helix" evidence="4">
    <location>
        <begin position="377"/>
        <end position="385"/>
    </location>
</feature>
<feature type="strand" evidence="4">
    <location>
        <begin position="391"/>
        <end position="395"/>
    </location>
</feature>
<feature type="helix" evidence="4">
    <location>
        <begin position="397"/>
        <end position="399"/>
    </location>
</feature>
<feature type="helix" evidence="4">
    <location>
        <begin position="400"/>
        <end position="405"/>
    </location>
</feature>
<feature type="strand" evidence="4">
    <location>
        <begin position="410"/>
        <end position="412"/>
    </location>
</feature>
<feature type="strand" evidence="4">
    <location>
        <begin position="419"/>
        <end position="422"/>
    </location>
</feature>
<feature type="helix" evidence="4">
    <location>
        <begin position="423"/>
        <end position="425"/>
    </location>
</feature>
<feature type="helix" evidence="4">
    <location>
        <begin position="430"/>
        <end position="452"/>
    </location>
</feature>
<feature type="helix" evidence="4">
    <location>
        <begin position="456"/>
        <end position="458"/>
    </location>
</feature>
<evidence type="ECO:0000250" key="1"/>
<evidence type="ECO:0000269" key="2">
    <source>
    </source>
</evidence>
<evidence type="ECO:0000305" key="3"/>
<evidence type="ECO:0007829" key="4">
    <source>
        <dbReference type="PDB" id="8BOQ"/>
    </source>
</evidence>
<sequence length="462" mass="51180">MTCEVKEKGRVGTINPIFTCQPAGAQFVSIGIKDCIGIVHGGQGCVMFVRLIFSQHYKESFELASSSLHEDGAVFGACGRVEEAVDVLLSRYPDVKVVPIITTCSTEIIGDDVDGVIKKLNEGLLKEKFPDREVHLIAMHTPSFVGSMISGYDVAVRDVVRHFAKREAPNDKINLLTGWVNPGDVKELKHLLGEMDIEANVLFEIESFDSPILPDGSAVSHGNTTIEDLIDTGNARATFALNRYEGTKAAEYLQKKFEIPAIIGPTPIGIRNTDIFLQNLKKATGKPIPQSLAHERGVAIDALADLTHMFLAEKRVAIYGAPDLVIGLAEFCLDLEMKPVLLLLGDDNSKYVDDPRIKALQENVDYGMEIVTNADFWELENRIKNEGLELDLILGHSKGRFISIDYNIPMLRVGFPTYDRAGLFRYPTVGYGGAIWLAEQMANTLFADMEHKKNKEWVLNVW</sequence>
<name>ANFK_AZOVI</name>
<dbReference type="EC" id="1.18.6.1"/>
<dbReference type="EMBL" id="M23528">
    <property type="protein sequence ID" value="AAA82511.1"/>
    <property type="molecule type" value="Genomic_DNA"/>
</dbReference>
<dbReference type="PIR" id="D32057">
    <property type="entry name" value="D32057"/>
</dbReference>
<dbReference type="RefSeq" id="WP_012703359.1">
    <property type="nucleotide sequence ID" value="NZ_FPKM01000001.1"/>
</dbReference>
<dbReference type="PDB" id="8BOQ">
    <property type="method" value="X-ray"/>
    <property type="resolution" value="1.55 A"/>
    <property type="chains" value="B/E=2-462"/>
</dbReference>
<dbReference type="PDBsum" id="8BOQ"/>
<dbReference type="SMR" id="P16267"/>
<dbReference type="GeneID" id="88187759"/>
<dbReference type="OMA" id="VGFPTYD"/>
<dbReference type="BioCyc" id="MetaCyc:MONOMER-16521"/>
<dbReference type="GO" id="GO:0005524">
    <property type="term" value="F:ATP binding"/>
    <property type="evidence" value="ECO:0007669"/>
    <property type="project" value="UniProtKB-KW"/>
</dbReference>
<dbReference type="GO" id="GO:0051536">
    <property type="term" value="F:iron-sulfur cluster binding"/>
    <property type="evidence" value="ECO:0007669"/>
    <property type="project" value="UniProtKB-KW"/>
</dbReference>
<dbReference type="GO" id="GO:0046872">
    <property type="term" value="F:metal ion binding"/>
    <property type="evidence" value="ECO:0007669"/>
    <property type="project" value="UniProtKB-KW"/>
</dbReference>
<dbReference type="GO" id="GO:0016163">
    <property type="term" value="F:nitrogenase activity"/>
    <property type="evidence" value="ECO:0007669"/>
    <property type="project" value="UniProtKB-EC"/>
</dbReference>
<dbReference type="GO" id="GO:0009399">
    <property type="term" value="P:nitrogen fixation"/>
    <property type="evidence" value="ECO:0007669"/>
    <property type="project" value="UniProtKB-KW"/>
</dbReference>
<dbReference type="CDD" id="cd01973">
    <property type="entry name" value="Nitrogenase_VFe_beta_like"/>
    <property type="match status" value="1"/>
</dbReference>
<dbReference type="Gene3D" id="3.40.50.1980">
    <property type="entry name" value="Nitrogenase molybdenum iron protein domain"/>
    <property type="match status" value="3"/>
</dbReference>
<dbReference type="Gene3D" id="1.20.89.10">
    <property type="entry name" value="Nitrogenase Molybdenum-iron Protein, subunit B, domain 4"/>
    <property type="match status" value="1"/>
</dbReference>
<dbReference type="InterPro" id="IPR050152">
    <property type="entry name" value="ChlB/BchB/BchZ"/>
</dbReference>
<dbReference type="InterPro" id="IPR000510">
    <property type="entry name" value="Nase/OxRdtase_comp1"/>
</dbReference>
<dbReference type="InterPro" id="IPR000318">
    <property type="entry name" value="Nase_comp1_CS"/>
</dbReference>
<dbReference type="InterPro" id="IPR014280">
    <property type="entry name" value="Nase_Fe-Fe_bsu"/>
</dbReference>
<dbReference type="NCBIfam" id="TIGR02931">
    <property type="entry name" value="anfK_nitrog"/>
    <property type="match status" value="1"/>
</dbReference>
<dbReference type="PANTHER" id="PTHR33712">
    <property type="entry name" value="LIGHT-INDEPENDENT PROTOCHLOROPHYLLIDE REDUCTASE SUBUNIT B"/>
    <property type="match status" value="1"/>
</dbReference>
<dbReference type="PANTHER" id="PTHR33712:SF7">
    <property type="entry name" value="LIGHT-INDEPENDENT PROTOCHLOROPHYLLIDE REDUCTASE SUBUNIT B"/>
    <property type="match status" value="1"/>
</dbReference>
<dbReference type="Pfam" id="PF00148">
    <property type="entry name" value="Oxidored_nitro"/>
    <property type="match status" value="1"/>
</dbReference>
<dbReference type="SUPFAM" id="SSF53807">
    <property type="entry name" value="Helical backbone' metal receptor"/>
    <property type="match status" value="1"/>
</dbReference>
<dbReference type="PROSITE" id="PS00699">
    <property type="entry name" value="NITROGENASE_1_1"/>
    <property type="match status" value="1"/>
</dbReference>
<dbReference type="PROSITE" id="PS00090">
    <property type="entry name" value="NITROGENASE_1_2"/>
    <property type="match status" value="1"/>
</dbReference>
<gene>
    <name type="primary">anfK</name>
</gene>
<organism>
    <name type="scientific">Azotobacter vinelandii</name>
    <dbReference type="NCBI Taxonomy" id="354"/>
    <lineage>
        <taxon>Bacteria</taxon>
        <taxon>Pseudomonadati</taxon>
        <taxon>Pseudomonadota</taxon>
        <taxon>Gammaproteobacteria</taxon>
        <taxon>Pseudomonadales</taxon>
        <taxon>Pseudomonadaceae</taxon>
        <taxon>Azotobacter</taxon>
    </lineage>
</organism>
<reference key="1">
    <citation type="journal article" date="1989" name="J. Bacteriol.">
        <title>Nucleotide sequence and mutational analysis of the structural genes (anfHDGK) for the second alternative nitrogenase from Azotobacter vinelandii.</title>
        <authorList>
            <person name="Joerger R.D."/>
            <person name="Jacobson M.R."/>
            <person name="Premakumar R."/>
            <person name="Wolfinger E.D."/>
            <person name="Bishop P.E."/>
        </authorList>
    </citation>
    <scope>NUCLEOTIDE SEQUENCE [GENOMIC DNA]</scope>
</reference>
<reference key="2">
    <citation type="journal article" date="1993" name="Biochem. J.">
        <title>Molybdenum-independent nitrogenases of Azotobacter vinelandii: a functional species of alternative nitrogenase-3 isolated from a molybdenum-tolerant strain contains an iron-molybdenum cofactor.</title>
        <authorList>
            <person name="Pau R.N."/>
            <person name="Eldridge M.E."/>
            <person name="Lowe D.J."/>
            <person name="Mitchenall L.A."/>
            <person name="Eady R.R."/>
        </authorList>
    </citation>
    <scope>PROTEIN SEQUENCE OF 2-7</scope>
    <source>
        <strain>RP306</strain>
    </source>
</reference>
<protein>
    <recommendedName>
        <fullName>Nitrogenase iron-iron protein beta chain</fullName>
        <ecNumber>1.18.6.1</ecNumber>
    </recommendedName>
    <alternativeName>
        <fullName>Dinitrogenase 3 subunit beta</fullName>
    </alternativeName>
    <alternativeName>
        <fullName>Nitrogenase component I</fullName>
    </alternativeName>
</protein>
<proteinExistence type="evidence at protein level"/>
<accession>P16267</accession>